<gene>
    <name evidence="1" type="primary">hisF</name>
    <name type="ordered locus">P9211_04261</name>
</gene>
<name>HIS6_PROM4</name>
<feature type="chain" id="PRO_1000190590" description="Imidazole glycerol phosphate synthase subunit HisF">
    <location>
        <begin position="1"/>
        <end position="258"/>
    </location>
</feature>
<feature type="active site" evidence="1">
    <location>
        <position position="11"/>
    </location>
</feature>
<feature type="active site" evidence="1">
    <location>
        <position position="130"/>
    </location>
</feature>
<organism>
    <name type="scientific">Prochlorococcus marinus (strain MIT 9211)</name>
    <dbReference type="NCBI Taxonomy" id="93059"/>
    <lineage>
        <taxon>Bacteria</taxon>
        <taxon>Bacillati</taxon>
        <taxon>Cyanobacteriota</taxon>
        <taxon>Cyanophyceae</taxon>
        <taxon>Synechococcales</taxon>
        <taxon>Prochlorococcaceae</taxon>
        <taxon>Prochlorococcus</taxon>
    </lineage>
</organism>
<keyword id="KW-0028">Amino-acid biosynthesis</keyword>
<keyword id="KW-0963">Cytoplasm</keyword>
<keyword id="KW-0368">Histidine biosynthesis</keyword>
<keyword id="KW-0456">Lyase</keyword>
<keyword id="KW-1185">Reference proteome</keyword>
<sequence length="258" mass="27456">MVALRLIPCLDVANGRVVKGVNFVGLRDAGDPVELAYRYSKSGADELVFLDIAASHEGRATLIEIVRRTAESVTIPFTVGGGISSIEGIKELLRAGADKVSLNSSAVRDPELIAQGANQFGSQCIVVAIDAKRRENCTSEWDVFVNGGRKNTKLDALEWAKKVAGLGAGEILLTSMDGDGTQNGYDLKLTRTIADALQIPVIASGGAGSLEHILEAFTEGKASAALLASLLHDGELTIEQIKDYLLKNQLLIRPVLDM</sequence>
<proteinExistence type="inferred from homology"/>
<evidence type="ECO:0000255" key="1">
    <source>
        <dbReference type="HAMAP-Rule" id="MF_01013"/>
    </source>
</evidence>
<comment type="function">
    <text evidence="1">IGPS catalyzes the conversion of PRFAR and glutamine to IGP, AICAR and glutamate. The HisF subunit catalyzes the cyclization activity that produces IGP and AICAR from PRFAR using the ammonia provided by the HisH subunit.</text>
</comment>
<comment type="catalytic activity">
    <reaction evidence="1">
        <text>5-[(5-phospho-1-deoxy-D-ribulos-1-ylimino)methylamino]-1-(5-phospho-beta-D-ribosyl)imidazole-4-carboxamide + L-glutamine = D-erythro-1-(imidazol-4-yl)glycerol 3-phosphate + 5-amino-1-(5-phospho-beta-D-ribosyl)imidazole-4-carboxamide + L-glutamate + H(+)</text>
        <dbReference type="Rhea" id="RHEA:24793"/>
        <dbReference type="ChEBI" id="CHEBI:15378"/>
        <dbReference type="ChEBI" id="CHEBI:29985"/>
        <dbReference type="ChEBI" id="CHEBI:58278"/>
        <dbReference type="ChEBI" id="CHEBI:58359"/>
        <dbReference type="ChEBI" id="CHEBI:58475"/>
        <dbReference type="ChEBI" id="CHEBI:58525"/>
        <dbReference type="EC" id="4.3.2.10"/>
    </reaction>
</comment>
<comment type="pathway">
    <text evidence="1">Amino-acid biosynthesis; L-histidine biosynthesis; L-histidine from 5-phospho-alpha-D-ribose 1-diphosphate: step 5/9.</text>
</comment>
<comment type="subunit">
    <text evidence="1">Heterodimer of HisH and HisF.</text>
</comment>
<comment type="subcellular location">
    <subcellularLocation>
        <location evidence="1">Cytoplasm</location>
    </subcellularLocation>
</comment>
<comment type="similarity">
    <text evidence="1">Belongs to the HisA/HisF family.</text>
</comment>
<accession>A9BE47</accession>
<protein>
    <recommendedName>
        <fullName evidence="1">Imidazole glycerol phosphate synthase subunit HisF</fullName>
        <ecNumber evidence="1">4.3.2.10</ecNumber>
    </recommendedName>
    <alternativeName>
        <fullName evidence="1">IGP synthase cyclase subunit</fullName>
    </alternativeName>
    <alternativeName>
        <fullName evidence="1">IGP synthase subunit HisF</fullName>
    </alternativeName>
    <alternativeName>
        <fullName evidence="1">ImGP synthase subunit HisF</fullName>
        <shortName evidence="1">IGPS subunit HisF</shortName>
    </alternativeName>
</protein>
<reference key="1">
    <citation type="journal article" date="2007" name="PLoS Genet.">
        <title>Patterns and implications of gene gain and loss in the evolution of Prochlorococcus.</title>
        <authorList>
            <person name="Kettler G.C."/>
            <person name="Martiny A.C."/>
            <person name="Huang K."/>
            <person name="Zucker J."/>
            <person name="Coleman M.L."/>
            <person name="Rodrigue S."/>
            <person name="Chen F."/>
            <person name="Lapidus A."/>
            <person name="Ferriera S."/>
            <person name="Johnson J."/>
            <person name="Steglich C."/>
            <person name="Church G.M."/>
            <person name="Richardson P."/>
            <person name="Chisholm S.W."/>
        </authorList>
    </citation>
    <scope>NUCLEOTIDE SEQUENCE [LARGE SCALE GENOMIC DNA]</scope>
    <source>
        <strain>MIT 9211</strain>
    </source>
</reference>
<dbReference type="EC" id="4.3.2.10" evidence="1"/>
<dbReference type="EMBL" id="CP000878">
    <property type="protein sequence ID" value="ABX08357.1"/>
    <property type="molecule type" value="Genomic_DNA"/>
</dbReference>
<dbReference type="RefSeq" id="WP_012194980.1">
    <property type="nucleotide sequence ID" value="NC_009976.1"/>
</dbReference>
<dbReference type="SMR" id="A9BE47"/>
<dbReference type="STRING" id="93059.P9211_04261"/>
<dbReference type="KEGG" id="pmj:P9211_04261"/>
<dbReference type="eggNOG" id="COG0107">
    <property type="taxonomic scope" value="Bacteria"/>
</dbReference>
<dbReference type="HOGENOM" id="CLU_048577_4_0_3"/>
<dbReference type="OrthoDB" id="9781903at2"/>
<dbReference type="UniPathway" id="UPA00031">
    <property type="reaction ID" value="UER00010"/>
</dbReference>
<dbReference type="Proteomes" id="UP000000788">
    <property type="component" value="Chromosome"/>
</dbReference>
<dbReference type="GO" id="GO:0005737">
    <property type="term" value="C:cytoplasm"/>
    <property type="evidence" value="ECO:0007669"/>
    <property type="project" value="UniProtKB-SubCell"/>
</dbReference>
<dbReference type="GO" id="GO:0000107">
    <property type="term" value="F:imidazoleglycerol-phosphate synthase activity"/>
    <property type="evidence" value="ECO:0007669"/>
    <property type="project" value="UniProtKB-UniRule"/>
</dbReference>
<dbReference type="GO" id="GO:0016829">
    <property type="term" value="F:lyase activity"/>
    <property type="evidence" value="ECO:0007669"/>
    <property type="project" value="UniProtKB-KW"/>
</dbReference>
<dbReference type="GO" id="GO:0000105">
    <property type="term" value="P:L-histidine biosynthetic process"/>
    <property type="evidence" value="ECO:0007669"/>
    <property type="project" value="UniProtKB-UniRule"/>
</dbReference>
<dbReference type="CDD" id="cd04731">
    <property type="entry name" value="HisF"/>
    <property type="match status" value="1"/>
</dbReference>
<dbReference type="FunFam" id="3.20.20.70:FF:000006">
    <property type="entry name" value="Imidazole glycerol phosphate synthase subunit HisF"/>
    <property type="match status" value="1"/>
</dbReference>
<dbReference type="Gene3D" id="3.20.20.70">
    <property type="entry name" value="Aldolase class I"/>
    <property type="match status" value="1"/>
</dbReference>
<dbReference type="HAMAP" id="MF_01013">
    <property type="entry name" value="HisF"/>
    <property type="match status" value="1"/>
</dbReference>
<dbReference type="InterPro" id="IPR013785">
    <property type="entry name" value="Aldolase_TIM"/>
</dbReference>
<dbReference type="InterPro" id="IPR006062">
    <property type="entry name" value="His_biosynth"/>
</dbReference>
<dbReference type="InterPro" id="IPR004651">
    <property type="entry name" value="HisF"/>
</dbReference>
<dbReference type="InterPro" id="IPR050064">
    <property type="entry name" value="IGPS_HisA/HisF"/>
</dbReference>
<dbReference type="InterPro" id="IPR011060">
    <property type="entry name" value="RibuloseP-bd_barrel"/>
</dbReference>
<dbReference type="NCBIfam" id="TIGR00735">
    <property type="entry name" value="hisF"/>
    <property type="match status" value="1"/>
</dbReference>
<dbReference type="PANTHER" id="PTHR21235:SF2">
    <property type="entry name" value="IMIDAZOLE GLYCEROL PHOSPHATE SYNTHASE HISHF"/>
    <property type="match status" value="1"/>
</dbReference>
<dbReference type="PANTHER" id="PTHR21235">
    <property type="entry name" value="IMIDAZOLE GLYCEROL PHOSPHATE SYNTHASE SUBUNIT HISF/H IGP SYNTHASE SUBUNIT HISF/H"/>
    <property type="match status" value="1"/>
</dbReference>
<dbReference type="Pfam" id="PF00977">
    <property type="entry name" value="His_biosynth"/>
    <property type="match status" value="1"/>
</dbReference>
<dbReference type="SUPFAM" id="SSF51366">
    <property type="entry name" value="Ribulose-phoshate binding barrel"/>
    <property type="match status" value="1"/>
</dbReference>